<name>K1A_STIHL</name>
<accession>P29187</accession>
<reference key="1">
    <citation type="journal article" date="1995" name="Toxicon">
        <title>Characterization of a potassium channel toxin from the Caribbean Sea anemone Stichodactyla helianthus.</title>
        <authorList>
            <person name="Castaneda O."/>
            <person name="Sotolongo V."/>
            <person name="Amor A.M."/>
            <person name="Stoecklin R."/>
            <person name="Anderson A.J."/>
            <person name="Harvey A.L."/>
            <person name="Engstrom A."/>
            <person name="Wernstedt C."/>
            <person name="Karlsson E."/>
        </authorList>
    </citation>
    <scope>PROTEIN SEQUENCE</scope>
    <scope>FUNCTION</scope>
    <scope>MASS SPECTROMETRY</scope>
    <source>
        <tissue>Nematoblast</tissue>
    </source>
</reference>
<reference key="2">
    <citation type="book" date="1992" name="Xeme congres europeen de toxinologie">
        <authorList>
            <person name="Karlsson E."/>
            <person name="Harvey A.L."/>
            <person name="Aneiros A."/>
            <person name="Castaneda O."/>
        </authorList>
    </citation>
    <scope>PROTEIN SEQUENCE</scope>
</reference>
<reference key="3">
    <citation type="book" date="1994" name="11th congress on animal, plant and microbial toxins, International Society on Toxinology">
        <authorList>
            <person name="Stoecklin R."/>
            <person name="Harvey A.L."/>
            <person name="Karlsson E."/>
        </authorList>
    </citation>
    <scope>DISULFIDE BONDS</scope>
    <scope>SIMILARITY</scope>
</reference>
<reference key="4">
    <citation type="journal article" date="1995" name="Int. J. Pept. Protein Res.">
        <title>Chemical synthesis and characterization of ShK toxin: a potent potassium channel inhibitor from a sea anemone.</title>
        <authorList>
            <person name="Pennington M.W."/>
            <person name="Byrnes M.E."/>
            <person name="Zaydenberg I."/>
            <person name="Khaytin I."/>
            <person name="de Chastonay J."/>
            <person name="Krafte D.S."/>
            <person name="Hill R."/>
            <person name="Mahnir V.M."/>
            <person name="Volberg W.A."/>
            <person name="Gorczyca W."/>
        </authorList>
    </citation>
    <scope>FUNCTION</scope>
    <scope>SYNTHESIS</scope>
</reference>
<reference key="5">
    <citation type="journal article" date="1995" name="Lett. Pept. Sci.">
        <title>Assignment of the three disulfide bonds in ShK toxin. A potent potassium channel inhibitor from the sea anemone Stichodactyla helianthus.</title>
        <authorList>
            <person name="Pohl J."/>
            <person name="Hubalek F."/>
            <person name="Byrnes M.E."/>
            <person name="Nielsen K.R."/>
            <person name="Woods A."/>
            <person name="Pennington M.W."/>
        </authorList>
    </citation>
    <scope>DISULFIDE BONDS</scope>
</reference>
<reference key="6">
    <citation type="journal article" date="1996" name="Biochem. Biophys. Res. Commun.">
        <title>Identification of three separate binding sites on SHK toxin, a potent inhibitor of voltage-dependent potassium channels in human T-lymphocytes and rat brain.</title>
        <authorList>
            <person name="Pennington M.W."/>
            <person name="Mahnir V.M."/>
            <person name="Krafte D.S."/>
            <person name="Zaydenberg I."/>
            <person name="Byrnes M.E."/>
            <person name="Khaytin I."/>
            <person name="Crowley K."/>
            <person name="Kem W.R."/>
        </authorList>
    </citation>
    <scope>FUNCTION</scope>
    <scope>MUTAGENESIS OF LYS-9; ARG-11 AND LYS-22</scope>
    <scope>SITES LYS-9; ARG-11 AND LYS-22</scope>
</reference>
<reference key="7">
    <citation type="journal article" date="1999" name="J. Biol. Chem.">
        <title>Structural conservation of the pores of calcium-activated and voltage-gated potassium channels determined by a sea anemone toxin.</title>
        <authorList>
            <person name="Rauer H."/>
            <person name="Pennington M."/>
            <person name="Cahalan M."/>
            <person name="Chandy K.G."/>
        </authorList>
    </citation>
    <scope>FUNCTION</scope>
    <scope>MUTAGENESIS OF SER-20</scope>
</reference>
<reference key="8">
    <citation type="journal article" date="2005" name="Mol. Pharmacol.">
        <title>Targeting effector memory T cells with a selective peptide inhibitor of Kv1.3 channels for therapy of autoimmune diseases.</title>
        <authorList>
            <person name="Beeton C."/>
            <person name="Pennington M.W."/>
            <person name="Wulff H."/>
            <person name="Singh S."/>
            <person name="Nugent D."/>
            <person name="Crossley G."/>
            <person name="Khaytin I."/>
            <person name="Calabresi P.A."/>
            <person name="Chen C.Y."/>
            <person name="Gutman G.A."/>
            <person name="Chandy K.G."/>
        </authorList>
    </citation>
    <scope>FUNCTION</scope>
</reference>
<reference key="9">
    <citation type="journal article" date="2012" name="Toxicon">
        <title>Development of a rational nomenclature for naming peptide and protein toxins from sea anemones.</title>
        <authorList>
            <person name="Oliveira J.S."/>
            <person name="Fuentes-Silva D."/>
            <person name="King G.F."/>
        </authorList>
    </citation>
    <scope>NOMENCLATURE</scope>
</reference>
<reference key="10">
    <citation type="journal article" date="2017" name="FEBS J.">
        <title>Defensin-neurotoxin dyad in a basally branching metazoan sea anemone.</title>
        <authorList>
            <person name="Kim C.H."/>
            <person name="Lee Y.J."/>
            <person name="Go H.J."/>
            <person name="Oh H.Y."/>
            <person name="Lee T.K."/>
            <person name="Park J.B."/>
            <person name="Park N.G."/>
        </authorList>
    </citation>
    <scope>FUNCTION AS ANTIBIOTIC</scope>
</reference>
<reference key="11">
    <citation type="journal article" date="2012" name="Toxicon">
        <title>Development of a sea anemone toxin as an immunomodulator for therapy of autoimmune diseases.</title>
        <authorList>
            <person name="Chi V."/>
            <person name="Pennington M.W."/>
            <person name="Norton R.S."/>
            <person name="Tarcha E.J."/>
            <person name="Londono L.M."/>
            <person name="Sims-Fahey B."/>
            <person name="Upadhyay S.K."/>
            <person name="Lakey J.T."/>
            <person name="Iadonato S."/>
            <person name="Wulff H."/>
            <person name="Beeton C."/>
            <person name="Chandy K.G."/>
        </authorList>
    </citation>
    <scope>REVIEW</scope>
</reference>
<reference key="12">
    <citation type="journal article" date="2018" name="Toxins">
        <title>Sea anemones: quiet achievers in the field of peptide toxins.</title>
        <authorList>
            <person name="Prentis P.J."/>
            <person name="Pavasovic A."/>
            <person name="Norton R.S."/>
        </authorList>
    </citation>
    <scope>REVIEW</scope>
</reference>
<reference key="13">
    <citation type="journal article" date="1996" name="Nat. Struct. Biol.">
        <title>Solution structure of ShK toxin, a novel potassium channel inhibitor from a sea anemone.</title>
        <authorList>
            <person name="Tudor J.E."/>
            <person name="Pallaghy P.K."/>
            <person name="Pennington M.W."/>
            <person name="Norton R.S."/>
        </authorList>
    </citation>
    <scope>STRUCTURE BY NMR</scope>
    <scope>DISULFIDE BONDS</scope>
</reference>
<reference key="14">
    <citation type="journal article" date="1998" name="J. Biol. Chem.">
        <title>ShK-Dap22, a potent Kv1.3-specific immunosuppressive polypeptide.</title>
        <authorList>
            <person name="Kalman K."/>
            <person name="Pennington M.W."/>
            <person name="Lanigan M.D."/>
            <person name="Nguyen A."/>
            <person name="Rauer H."/>
            <person name="Mahnir V."/>
            <person name="Paschetto K."/>
            <person name="Kem W.R."/>
            <person name="Grissmer S."/>
            <person name="Gutman G.A."/>
            <person name="Christian E.P."/>
            <person name="Cahalan M.D."/>
            <person name="Norton R.S."/>
            <person name="Chandy K.G."/>
        </authorList>
    </citation>
    <scope>STRUCTURE BY NMR</scope>
    <scope>DISULFIDE BONDS</scope>
    <scope>FUNCTION</scope>
</reference>
<reference key="15">
    <citation type="journal article" date="1999" name="Biochemistry">
        <title>Role of disulfide bonds in the structure and potassium channel blocking activity of ShK toxin.</title>
        <authorList>
            <person name="Pennington M.W."/>
            <person name="Lanigan M.D."/>
            <person name="Kalman K."/>
            <person name="Mahnir V.M."/>
            <person name="Rauer H."/>
            <person name="McVaugh C.T."/>
            <person name="Behm D."/>
            <person name="Donaldson D."/>
            <person name="Chandy K.G."/>
            <person name="Kem W.R."/>
            <person name="Norton R.S."/>
        </authorList>
    </citation>
    <scope>STRUCTURE BY NMR OF SHK WITHOUT DISULFIDE BOND BETWEEN CYS-3 AND CYS-35</scope>
    <scope>FUNCTION</scope>
</reference>
<reference key="16">
    <citation type="journal article" date="2009" name="Mol. Pharmacol.">
        <title>Engineering a stable and selective peptide blocker of the Kv1.3 channel in T lymphocytes.</title>
        <authorList>
            <person name="Pennington M.W."/>
            <person name="Beeton C."/>
            <person name="Galea C.A."/>
            <person name="Smith B.J."/>
            <person name="Chi V."/>
            <person name="Monaghan K.P."/>
            <person name="Garcia A."/>
            <person name="Rangaraju S."/>
            <person name="Giuffrida A."/>
            <person name="Plank D."/>
            <person name="Crossley G."/>
            <person name="Nugent D."/>
            <person name="Khaytin I."/>
            <person name="Lefievre Y."/>
            <person name="Peshenko I."/>
            <person name="Dixon C."/>
            <person name="Chauhan S."/>
            <person name="Orzel A."/>
            <person name="Inoue T."/>
            <person name="Hu X."/>
            <person name="Moore R.V."/>
            <person name="Norton R.S."/>
            <person name="Chandy K.G."/>
        </authorList>
    </citation>
    <scope>STRUCTURE BY NMR OF THE SYNTHETIC MUTANT SHK-192</scope>
    <scope>3D-STRUCTURE MODELING OF SHK-192 IN COMPLEX WITH KV1.3 POTASSIUM CHANNEL</scope>
</reference>
<reference key="17">
    <citation type="journal article" date="2013" name="J. Am. Chem. Soc.">
        <title>Native chemical ligation at Asx-Cys, Glx-Cys: chemical synthesis and high-resolution X-ray structure of ShK toxin by racemic protein crystallography.</title>
        <authorList>
            <person name="Dang B."/>
            <person name="Kubota T."/>
            <person name="Mandal K."/>
            <person name="Bezanilla F."/>
            <person name="Kent S.B."/>
        </authorList>
    </citation>
    <scope>X-RAY CRYSTALLOGRAPHY (0.97 ANGSTROMS) OF SYNTHETIC L-SHK AND D-SHK</scope>
</reference>
<reference key="18">
    <citation type="journal article" date="2015" name="J. Med. Chem.">
        <title>Pharmaceutical optimization of peptide toxins for ion channel targets: potent, selective, and long-lived antagonists of Kv1.3.</title>
        <authorList>
            <person name="Murray J.K."/>
            <person name="Qian Y.X."/>
            <person name="Liu B."/>
            <person name="Elliott R."/>
            <person name="Aral J."/>
            <person name="Park C."/>
            <person name="Zhang X."/>
            <person name="Stenkilsson M."/>
            <person name="Salyers K."/>
            <person name="Rose M."/>
            <person name="Li H."/>
            <person name="Yu S."/>
            <person name="Andrews K.L."/>
            <person name="Colombero A."/>
            <person name="Werner J."/>
            <person name="Gaida K."/>
            <person name="Sickmier E.A."/>
            <person name="Miu P."/>
            <person name="Itano A."/>
            <person name="McGivern J."/>
            <person name="Gegg C.V."/>
            <person name="Sullivan J.K."/>
            <person name="Miranda L.P."/>
        </authorList>
    </citation>
    <scope>X-RAY CRYSTALLOGRAPHY (1.2 ANGSTROMS) OF MUTANT GLN-16</scope>
    <scope>FUNCTION</scope>
    <scope>MUTAGENESIS OF ILE-7; ARG-11; GLN-16; SER-20; MET-21; LYS-22; TYR-23 AND PHE-27</scope>
    <scope>BIOASSAY</scope>
</reference>
<reference key="19">
    <citation type="journal article" date="2017" name="Angew. Chem. Int. Ed.">
        <title>Inversion of the side-chain stereochemistry of indvidual Thr or Ile residues in a protein molecule: impact on the folding, stability, and structure of the ShK toxin.</title>
        <authorList>
            <person name="Dang B."/>
            <person name="Shen R."/>
            <person name="Kubota T."/>
            <person name="Mandal K."/>
            <person name="Bezanilla F."/>
            <person name="Roux B."/>
            <person name="Kent S.B."/>
        </authorList>
    </citation>
    <scope>X-RAY CRYSTALLOGRAPHY (0.9 ANGSTROMS) OF SYNTHETIC [ALLO-ILE7]SHK; [ALLO-THR13]SHK; [ALLO-THR31]SHK AND D-SHK</scope>
</reference>
<organism>
    <name type="scientific">Stichodactyla helianthus</name>
    <name type="common">Sun anemone</name>
    <name type="synonym">Stoichactis helianthus</name>
    <dbReference type="NCBI Taxonomy" id="6123"/>
    <lineage>
        <taxon>Eukaryota</taxon>
        <taxon>Metazoa</taxon>
        <taxon>Cnidaria</taxon>
        <taxon>Anthozoa</taxon>
        <taxon>Hexacorallia</taxon>
        <taxon>Actiniaria</taxon>
        <taxon>Stichodactylidae</taxon>
        <taxon>Stichodactyla</taxon>
    </lineage>
</organism>
<comment type="function">
    <text evidence="2 3 4 6 7 8 9 10 13">Peptide with both antimicrobial and neurotoxin activities. Inhibits voltage-dependent potassium channels. Potently blocks Kv1.1/KCNA1 (IC(50)=6.7-87 pM) and Kv1.3/KCNA3 (IC(50)=10-250 pM) (PubMed:10545177, PubMed:15665253, PubMed:23919482, PubMed:26288216, PubMed:28194851, PubMed:8567178, PubMed:9830012). Less potently blocks Kv1.4/KCNA4 (IC(50)=0.31 nM), and Kv1.6/KCNA6 (IC(50)=0.16 nM) (PubMed:9830012). Shows moderate activity on Kv1.2/KCNA2 (IC(50)=9 nM), Kv1.7/KCNA7 (IC(50)=11.5 nM), and KCa3.1/KCNN4 (Kd=0.03-30 nM) (PubMed:10419508, PubMed:9830012). Blocks Kv channels by binding to a shallow vestibule at the outer entrance to the ion conduction pathway and occluding the entrance to the pore (PubMed:10419508, PubMed:9830012). Shows antibacterial activity against all tested bacteria (the Gram-positive bacteria B.subtilis and S.aureus, and the Gram-negative bacteria S.typhimurium and P.aeruginosa) (PubMed:28796463).</text>
</comment>
<comment type="subcellular location">
    <subcellularLocation>
        <location evidence="22">Secreted</location>
    </subcellularLocation>
    <subcellularLocation>
        <location evidence="19">Nematocyst</location>
    </subcellularLocation>
</comment>
<comment type="mass spectrometry" mass="4054.82" error="0.1" method="Electrospray" evidence="9"/>
<comment type="pharmaceutical">
    <text evidence="20 21">Synthetic analog ShK-186 is under clinical trial by 'Kv1.3 Therapeutics, Inc.' under the name dalazatide. Dalazatide has been validated in multiple models of autoimmune disease and has demonstrated proof of concept in a Phase 1b study in psoriasis. Dalazatide is ready to begin Phase 2 clinical studies for inclusion body myositis (IBM) a rare disease with no approved treatment options and generally poor prognosis for the patients. The dalazatide development program is focused on providing a breakthrough treatment first for IBM and then followed by other rare and autoimmune diseases. ShK-186 contains an L-phosphotyrosine attached via an AEEA (mini-PEG) hydrophilic linker to Arg-1 and is amidated.</text>
</comment>
<comment type="miscellaneous">
    <text evidence="13">Negative results: does not show or very weak activity on Kv1.5/KCNA5, Kv3.1/KCNC1, and Kv3.4/KCNC4 (IC(50)&gt;100 nM).</text>
</comment>
<comment type="miscellaneous">
    <text evidence="5">The synthetic analog ShK-192 has a paraphosphono-Phe (Ppa) at position 0, a Norleucine at position 21, and is amidated. It is stable at acidic pH values and high temperatures. The circulating half-life of the synthetic mutant is estimated to be about 30 minutes in rats. However, low concentrations of functionally active peptide are detected in the blood 72 hours after the injection. The synthetic mutant effectively inhibits the proliferation of T lymphocytes (T(EM)) cells in rats and suppresses delayed type hypersensitivity when administered at 10 or 100 ug/kg by subcutaneous injection once daily.</text>
</comment>
<comment type="miscellaneous">
    <text evidence="7">The synthetic analog ShK-145 has a 20 kDa polyethylene glycol (PEG), and a Lys at position 16. In vivo, its injection into rat model of multiple sclerosis inhibits the progression of the disease. In addition, weekly administration of ShK-145 suppress interleukin-17 (IL-17) cytokine secretion from T cells in cynomolgus monkeys and does not show adverse side effects.</text>
</comment>
<comment type="miscellaneous">
    <text evidence="4">The synthetic analog ShK-L5 contains a L-phosphotyrosine linked via a hydrophilic linker to the N-terminus of the ShK peptide. It is a highly specific Kv1.3/KCNA3 blocker that exhibits 100-fold selectivity for Kv1.3/KCNA3 over Kv1.1/KCNA1 and greater than 250-fold selectivity over all other channels tested. In vivo, it does not cause cardiac toxicity and does not alter clinical chemistry and hematological parameters after 2-week therapy. It also prevents and treats experimental autoimmune encephalomyelitis and suppresses delayed type hypersensitivity in rats.</text>
</comment>
<comment type="similarity">
    <text evidence="19">Belongs to the sea anemone type 1 potassium channel toxin family. Type 1a subfamily.</text>
</comment>
<feature type="peptide" id="PRO_0000044866" description="Kappa-stichotoxin-She3a" evidence="9 14">
    <location>
        <begin position="1"/>
        <end position="35"/>
    </location>
</feature>
<feature type="domain" description="ShKT" evidence="1">
    <location>
        <begin position="3"/>
        <end position="35"/>
    </location>
</feature>
<feature type="site" description="Important residue for binding Kv1.3/KCNA3" evidence="7">
    <location>
        <position position="7"/>
    </location>
</feature>
<feature type="site" description="Important residue for binding Kv1.3/KCNA3" evidence="12">
    <location>
        <position position="9"/>
    </location>
</feature>
<feature type="site" description="Important residue for binding Kv1.3/KCNA3" evidence="7 12">
    <location>
        <position position="11"/>
    </location>
</feature>
<feature type="site" description="Important residue for binding Kv1.3/KCNA3" evidence="7">
    <location>
        <position position="20"/>
    </location>
</feature>
<feature type="site" description="Important residue for binding Kv1.3/KCNA3" evidence="7">
    <location>
        <position position="21"/>
    </location>
</feature>
<feature type="site" description="Key residue for binding both Kv1.2/KCNA2 and Kv1.3/KCNA3 (occludes the channel pore like a cork in a bottle)" evidence="7 12">
    <location>
        <position position="22"/>
    </location>
</feature>
<feature type="site" description="Important residue for binding Kv1.3/KCNA3" evidence="7">
    <location>
        <position position="23"/>
    </location>
</feature>
<feature type="site" description="Important residue for binding Kv1.3/KCNA3" evidence="7">
    <location>
        <position position="27"/>
    </location>
</feature>
<feature type="disulfide bond" evidence="11 13 15 16 23 25 26 27 28 29 30 31 32">
    <location>
        <begin position="3"/>
        <end position="35"/>
    </location>
</feature>
<feature type="disulfide bond" evidence="3 11 13 15 16 23 24 25 26 27 28 29 30 31 32">
    <location>
        <begin position="12"/>
        <end position="28"/>
    </location>
</feature>
<feature type="disulfide bond" evidence="3 11 13 15 16 23 24 25 26 27 28 29 30 31 32">
    <location>
        <begin position="17"/>
        <end position="32"/>
    </location>
</feature>
<feature type="mutagenesis site" description="10-fold decrease in potency of inhibition of Kv1.3/KCNA3." evidence="7">
    <original>I</original>
    <variation>Q</variation>
    <location>
        <position position="7"/>
    </location>
</feature>
<feature type="mutagenesis site" description="10-fold decrease in potency of inhibition of Kv1.3/KCNA3." evidence="12">
    <original>K</original>
    <variation>Q</variation>
    <location>
        <position position="9"/>
    </location>
</feature>
<feature type="mutagenesis site" description="7.5- to 42-fold decrease in potency of inhibition of Kv1.3/KCNA3." evidence="7 12">
    <original>R</original>
    <variation>Q</variation>
    <location>
        <position position="11"/>
    </location>
</feature>
<feature type="mutagenesis site" description="6.6-fold increase in selectivity for Kv1.3/KCNA3 over Kv1.1/KCNA1, which is marked by a 2.6-fold and 117-fold decrease in potency of inhibition of Kv1.3/KCNA3 and Kv1.1/KCNA1, respectively." evidence="7">
    <original>Q</original>
    <variation>K</variation>
    <location>
        <position position="16"/>
    </location>
</feature>
<feature type="mutagenesis site" description="20-fold decrease in potency of inhibition of Kv1.3/KCNA3, and 80-fold decrease in potency of inhibition of KCa3.1/KCNN4." evidence="2">
    <original>S</original>
    <variation>A</variation>
    <location>
        <position position="20"/>
    </location>
</feature>
<feature type="mutagenesis site" description="More than 25-fold decrease in potency of inhibition of Kv1.3/KCNA3." evidence="7">
    <original>S</original>
    <variation>Q</variation>
    <variation>R</variation>
    <location>
        <position position="20"/>
    </location>
</feature>
<feature type="mutagenesis site" description="More than 25-fold decrease in potency of inhibition of Kv1.3/KCNA3." evidence="7">
    <original>M</original>
    <variation>Q</variation>
    <location>
        <position position="21"/>
    </location>
</feature>
<feature type="mutagenesis site" description="More than 25-fold decrease in potency of inhibition of Kv1.3/KCNA3." evidence="7 12">
    <original>K</original>
    <variation>Q</variation>
    <variation>R</variation>
    <location>
        <position position="22"/>
    </location>
</feature>
<feature type="mutagenesis site" description="More than 25-fold decrease in potency of inhibition of Kv1.3/KCNA3." evidence="7">
    <original>Y</original>
    <variation>Q</variation>
    <variation>R</variation>
    <location>
        <position position="23"/>
    </location>
</feature>
<feature type="mutagenesis site" description="More than 25-fold decrease in potency of inhibition of Kv1.3/KCNA3." evidence="7">
    <original>F</original>
    <variation>Q</variation>
    <variation>R</variation>
    <location>
        <position position="27"/>
    </location>
</feature>
<feature type="strand" evidence="33">
    <location>
        <begin position="3"/>
        <end position="7"/>
    </location>
</feature>
<feature type="helix" evidence="34">
    <location>
        <begin position="9"/>
        <end position="11"/>
    </location>
</feature>
<feature type="helix" evidence="34">
    <location>
        <begin position="14"/>
        <end position="17"/>
    </location>
</feature>
<feature type="helix" evidence="34">
    <location>
        <begin position="21"/>
        <end position="25"/>
    </location>
</feature>
<feature type="turn" evidence="34">
    <location>
        <begin position="29"/>
        <end position="33"/>
    </location>
</feature>
<sequence length="35" mass="4061">RSCIDTIPKSRCTAFQCKHSMKYRLSFCRKTCGTC</sequence>
<dbReference type="PDB" id="1BEI">
    <property type="method" value="NMR"/>
    <property type="chains" value="A=1-35"/>
</dbReference>
<dbReference type="PDB" id="1C2U">
    <property type="method" value="NMR"/>
    <property type="chains" value="A=1-35"/>
</dbReference>
<dbReference type="PDB" id="1ROO">
    <property type="method" value="NMR"/>
    <property type="chains" value="A=1-35"/>
</dbReference>
<dbReference type="PDB" id="2K9E">
    <property type="method" value="NMR"/>
    <property type="chains" value="A=1-35"/>
</dbReference>
<dbReference type="PDB" id="4LFQ">
    <property type="method" value="X-ray"/>
    <property type="resolution" value="1.06 A"/>
    <property type="chains" value="A=1-35"/>
</dbReference>
<dbReference type="PDB" id="4LFS">
    <property type="method" value="X-ray"/>
    <property type="resolution" value="0.97 A"/>
    <property type="chains" value="A=1-35"/>
</dbReference>
<dbReference type="PDB" id="4Z7P">
    <property type="method" value="X-ray"/>
    <property type="resolution" value="1.20 A"/>
    <property type="chains" value="A=1-35"/>
</dbReference>
<dbReference type="PDB" id="5I5A">
    <property type="method" value="X-ray"/>
    <property type="resolution" value="1.20 A"/>
    <property type="chains" value="A=1-35"/>
</dbReference>
<dbReference type="PDB" id="5I5B">
    <property type="method" value="X-ray"/>
    <property type="resolution" value="0.90 A"/>
    <property type="chains" value="A=1-35"/>
</dbReference>
<dbReference type="PDB" id="5I5C">
    <property type="method" value="X-ray"/>
    <property type="resolution" value="1.30 A"/>
    <property type="chains" value="A/B/C=1-35"/>
</dbReference>
<dbReference type="PDBsum" id="1BEI"/>
<dbReference type="PDBsum" id="1C2U"/>
<dbReference type="PDBsum" id="1ROO"/>
<dbReference type="PDBsum" id="2K9E"/>
<dbReference type="PDBsum" id="4LFQ"/>
<dbReference type="PDBsum" id="4LFS"/>
<dbReference type="PDBsum" id="4Z7P"/>
<dbReference type="PDBsum" id="5I5A"/>
<dbReference type="PDBsum" id="5I5B"/>
<dbReference type="PDBsum" id="5I5C"/>
<dbReference type="BMRB" id="P29187"/>
<dbReference type="SMR" id="P29187"/>
<dbReference type="TCDB" id="8.B.14.1.2">
    <property type="family name" value="the sea anemone peptide toxin, class 1 (bgk) family"/>
</dbReference>
<dbReference type="EvolutionaryTrace" id="P29187"/>
<dbReference type="GO" id="GO:0005576">
    <property type="term" value="C:extracellular region"/>
    <property type="evidence" value="ECO:0007669"/>
    <property type="project" value="UniProtKB-SubCell"/>
</dbReference>
<dbReference type="GO" id="GO:0042151">
    <property type="term" value="C:nematocyst"/>
    <property type="evidence" value="ECO:0007669"/>
    <property type="project" value="UniProtKB-SubCell"/>
</dbReference>
<dbReference type="GO" id="GO:0015459">
    <property type="term" value="F:potassium channel regulator activity"/>
    <property type="evidence" value="ECO:0007669"/>
    <property type="project" value="UniProtKB-KW"/>
</dbReference>
<dbReference type="GO" id="GO:0090729">
    <property type="term" value="F:toxin activity"/>
    <property type="evidence" value="ECO:0007669"/>
    <property type="project" value="UniProtKB-KW"/>
</dbReference>
<dbReference type="GO" id="GO:0042742">
    <property type="term" value="P:defense response to bacterium"/>
    <property type="evidence" value="ECO:0007669"/>
    <property type="project" value="UniProtKB-KW"/>
</dbReference>
<dbReference type="InterPro" id="IPR003582">
    <property type="entry name" value="ShKT_dom"/>
</dbReference>
<dbReference type="SUPFAM" id="SSF57546">
    <property type="entry name" value="Crisp domain-like"/>
    <property type="match status" value="1"/>
</dbReference>
<dbReference type="PROSITE" id="PS51670">
    <property type="entry name" value="SHKT"/>
    <property type="match status" value="1"/>
</dbReference>
<evidence type="ECO:0000255" key="1">
    <source>
        <dbReference type="PROSITE-ProRule" id="PRU01005"/>
    </source>
</evidence>
<evidence type="ECO:0000269" key="2">
    <source>
    </source>
</evidence>
<evidence type="ECO:0000269" key="3">
    <source>
    </source>
</evidence>
<evidence type="ECO:0000269" key="4">
    <source>
    </source>
</evidence>
<evidence type="ECO:0000269" key="5">
    <source>
    </source>
</evidence>
<evidence type="ECO:0000269" key="6">
    <source>
    </source>
</evidence>
<evidence type="ECO:0000269" key="7">
    <source>
    </source>
</evidence>
<evidence type="ECO:0000269" key="8">
    <source>
    </source>
</evidence>
<evidence type="ECO:0000269" key="9">
    <source>
    </source>
</evidence>
<evidence type="ECO:0000269" key="10">
    <source>
    </source>
</evidence>
<evidence type="ECO:0000269" key="11">
    <source>
    </source>
</evidence>
<evidence type="ECO:0000269" key="12">
    <source>
    </source>
</evidence>
<evidence type="ECO:0000269" key="13">
    <source>
    </source>
</evidence>
<evidence type="ECO:0000269" key="14">
    <source ref="2"/>
</evidence>
<evidence type="ECO:0000269" key="15">
    <source ref="3"/>
</evidence>
<evidence type="ECO:0000269" key="16">
    <source ref="5"/>
</evidence>
<evidence type="ECO:0000303" key="17">
    <source>
    </source>
</evidence>
<evidence type="ECO:0000303" key="18">
    <source>
    </source>
</evidence>
<evidence type="ECO:0000305" key="19"/>
<evidence type="ECO:0000305" key="20">
    <source>
    </source>
</evidence>
<evidence type="ECO:0000305" key="21">
    <source>
    </source>
</evidence>
<evidence type="ECO:0000305" key="22">
    <source ref="2"/>
</evidence>
<evidence type="ECO:0000312" key="23">
    <source>
        <dbReference type="PDB" id="1BEI"/>
    </source>
</evidence>
<evidence type="ECO:0000312" key="24">
    <source>
        <dbReference type="PDB" id="1C2U"/>
    </source>
</evidence>
<evidence type="ECO:0000312" key="25">
    <source>
        <dbReference type="PDB" id="1ROO"/>
    </source>
</evidence>
<evidence type="ECO:0000312" key="26">
    <source>
        <dbReference type="PDB" id="2K9E"/>
    </source>
</evidence>
<evidence type="ECO:0000312" key="27">
    <source>
        <dbReference type="PDB" id="4LFQ"/>
    </source>
</evidence>
<evidence type="ECO:0000312" key="28">
    <source>
        <dbReference type="PDB" id="4LFS"/>
    </source>
</evidence>
<evidence type="ECO:0000312" key="29">
    <source>
        <dbReference type="PDB" id="4Z7P"/>
    </source>
</evidence>
<evidence type="ECO:0000312" key="30">
    <source>
        <dbReference type="PDB" id="5I5A"/>
    </source>
</evidence>
<evidence type="ECO:0000312" key="31">
    <source>
        <dbReference type="PDB" id="5I5B"/>
    </source>
</evidence>
<evidence type="ECO:0000312" key="32">
    <source>
        <dbReference type="PDB" id="5I5C"/>
    </source>
</evidence>
<evidence type="ECO:0007829" key="33">
    <source>
        <dbReference type="PDB" id="4LFS"/>
    </source>
</evidence>
<evidence type="ECO:0007829" key="34">
    <source>
        <dbReference type="PDB" id="5I5B"/>
    </source>
</evidence>
<keyword id="KW-0002">3D-structure</keyword>
<keyword id="KW-0044">Antibiotic</keyword>
<keyword id="KW-0929">Antimicrobial</keyword>
<keyword id="KW-0903">Direct protein sequencing</keyword>
<keyword id="KW-1015">Disulfide bond</keyword>
<keyword id="KW-0872">Ion channel impairing toxin</keyword>
<keyword id="KW-0166">Nematocyst</keyword>
<keyword id="KW-0528">Neurotoxin</keyword>
<keyword id="KW-0582">Pharmaceutical</keyword>
<keyword id="KW-0632">Potassium channel impairing toxin</keyword>
<keyword id="KW-0964">Secreted</keyword>
<keyword id="KW-0800">Toxin</keyword>
<keyword id="KW-1220">Voltage-gated potassium channel impairing toxin</keyword>
<proteinExistence type="evidence at protein level"/>
<protein>
    <recommendedName>
        <fullName evidence="17">Kappa-stichotoxin-She3a</fullName>
        <shortName evidence="17">Kappa-SHTX-She3a</shortName>
    </recommendedName>
    <alternativeName>
        <fullName evidence="18">Potassium channel toxin ShK</fullName>
    </alternativeName>
</protein>